<proteinExistence type="evidence at protein level"/>
<protein>
    <recommendedName>
        <fullName>Sperm-specific protein PL-I</fullName>
        <shortName>PL-I</shortName>
    </recommendedName>
    <alternativeName>
        <fullName>Sperm-specific linker histone H1-like protein</fullName>
    </alternativeName>
</protein>
<comment type="function">
    <text evidence="1">Linker histones are implicated in chromatin remodeling and/or transcriptional regulation during spermiogenesis, the process of spermatid maturation into spermatozoa.</text>
</comment>
<comment type="subcellular location">
    <subcellularLocation>
        <location>Nucleus</location>
    </subcellularLocation>
    <subcellularLocation>
        <location>Chromosome</location>
    </subcellularLocation>
</comment>
<comment type="tissue specificity">
    <text>Sperm.</text>
</comment>
<comment type="similarity">
    <text evidence="2">Belongs to the histone H1/H5 family.</text>
</comment>
<reference key="1">
    <citation type="journal article" date="1987" name="Biochemistry">
        <title>Structural characterization of the trypsin-resistant core in the nuclear sperm-specific protein from Spisula solidissima.</title>
        <authorList>
            <person name="Ausio J."/>
            <person name="Toumadje A."/>
            <person name="McParland R."/>
            <person name="Becker R.R."/>
            <person name="Johnson W.C. Jr."/>
            <person name="van Holde K.E."/>
        </authorList>
    </citation>
    <scope>PROTEIN SEQUENCE</scope>
    <source>
        <tissue>Sperm</tissue>
    </source>
</reference>
<name>H1L_SPISO</name>
<dbReference type="PIR" id="A27540">
    <property type="entry name" value="A27540"/>
</dbReference>
<dbReference type="SMR" id="P22975"/>
<dbReference type="GO" id="GO:0000786">
    <property type="term" value="C:nucleosome"/>
    <property type="evidence" value="ECO:0007669"/>
    <property type="project" value="UniProtKB-KW"/>
</dbReference>
<dbReference type="GO" id="GO:0005634">
    <property type="term" value="C:nucleus"/>
    <property type="evidence" value="ECO:0007669"/>
    <property type="project" value="UniProtKB-SubCell"/>
</dbReference>
<dbReference type="GO" id="GO:0003677">
    <property type="term" value="F:DNA binding"/>
    <property type="evidence" value="ECO:0007669"/>
    <property type="project" value="UniProtKB-KW"/>
</dbReference>
<dbReference type="GO" id="GO:0030154">
    <property type="term" value="P:cell differentiation"/>
    <property type="evidence" value="ECO:0007669"/>
    <property type="project" value="UniProtKB-KW"/>
</dbReference>
<dbReference type="GO" id="GO:0030261">
    <property type="term" value="P:chromosome condensation"/>
    <property type="evidence" value="ECO:0007669"/>
    <property type="project" value="UniProtKB-KW"/>
</dbReference>
<dbReference type="GO" id="GO:0006334">
    <property type="term" value="P:nucleosome assembly"/>
    <property type="evidence" value="ECO:0007669"/>
    <property type="project" value="InterPro"/>
</dbReference>
<dbReference type="GO" id="GO:0007283">
    <property type="term" value="P:spermatogenesis"/>
    <property type="evidence" value="ECO:0007669"/>
    <property type="project" value="UniProtKB-KW"/>
</dbReference>
<dbReference type="CDD" id="cd00073">
    <property type="entry name" value="H15"/>
    <property type="match status" value="1"/>
</dbReference>
<dbReference type="Gene3D" id="1.10.10.10">
    <property type="entry name" value="Winged helix-like DNA-binding domain superfamily/Winged helix DNA-binding domain"/>
    <property type="match status" value="1"/>
</dbReference>
<dbReference type="InterPro" id="IPR005818">
    <property type="entry name" value="Histone_H1/H5_H15"/>
</dbReference>
<dbReference type="InterPro" id="IPR036388">
    <property type="entry name" value="WH-like_DNA-bd_sf"/>
</dbReference>
<dbReference type="InterPro" id="IPR036390">
    <property type="entry name" value="WH_DNA-bd_sf"/>
</dbReference>
<dbReference type="Pfam" id="PF00538">
    <property type="entry name" value="Linker_histone"/>
    <property type="match status" value="1"/>
</dbReference>
<dbReference type="SMART" id="SM00526">
    <property type="entry name" value="H15"/>
    <property type="match status" value="1"/>
</dbReference>
<dbReference type="SUPFAM" id="SSF46785">
    <property type="entry name" value="Winged helix' DNA-binding domain"/>
    <property type="match status" value="1"/>
</dbReference>
<dbReference type="PROSITE" id="PS51504">
    <property type="entry name" value="H15"/>
    <property type="match status" value="1"/>
</dbReference>
<evidence type="ECO:0000250" key="1"/>
<evidence type="ECO:0000255" key="2">
    <source>
        <dbReference type="PROSITE-ProRule" id="PRU00837"/>
    </source>
</evidence>
<sequence length="75" mass="7644">KGSSGMMSMVAAAIAANRTKKGASAQAIRKYVAAHSSLKGAVLNFRLRRALAAGLKSGALAHPKGSAGWVLVPKK</sequence>
<feature type="chain" id="PRO_0000196011" description="Sperm-specific protein PL-I">
    <location>
        <begin position="1" status="less than"/>
        <end position="75" status="greater than"/>
    </location>
</feature>
<feature type="domain" description="H15" evidence="2">
    <location>
        <begin position="2"/>
        <end position="74"/>
    </location>
</feature>
<feature type="non-terminal residue">
    <location>
        <position position="1"/>
    </location>
</feature>
<feature type="non-terminal residue">
    <location>
        <position position="75"/>
    </location>
</feature>
<keyword id="KW-0158">Chromosome</keyword>
<keyword id="KW-0217">Developmental protein</keyword>
<keyword id="KW-0221">Differentiation</keyword>
<keyword id="KW-0903">Direct protein sequencing</keyword>
<keyword id="KW-0226">DNA condensation</keyword>
<keyword id="KW-0238">DNA-binding</keyword>
<keyword id="KW-0544">Nucleosome core</keyword>
<keyword id="KW-0539">Nucleus</keyword>
<keyword id="KW-0744">Spermatogenesis</keyword>
<accession>P22975</accession>
<organism>
    <name type="scientific">Spisula solidissima</name>
    <name type="common">Atlantic surf-clam</name>
    <dbReference type="NCBI Taxonomy" id="6584"/>
    <lineage>
        <taxon>Eukaryota</taxon>
        <taxon>Metazoa</taxon>
        <taxon>Spiralia</taxon>
        <taxon>Lophotrochozoa</taxon>
        <taxon>Mollusca</taxon>
        <taxon>Bivalvia</taxon>
        <taxon>Autobranchia</taxon>
        <taxon>Heteroconchia</taxon>
        <taxon>Euheterodonta</taxon>
        <taxon>Imparidentia</taxon>
        <taxon>Neoheterodontei</taxon>
        <taxon>Venerida</taxon>
        <taxon>Mactroidea</taxon>
        <taxon>Mactridae</taxon>
        <taxon>Spisula</taxon>
    </lineage>
</organism>